<evidence type="ECO:0000255" key="1"/>
<evidence type="ECO:0000269" key="2">
    <source>
    </source>
</evidence>
<evidence type="ECO:0000269" key="3">
    <source>
    </source>
</evidence>
<evidence type="ECO:0000305" key="4"/>
<sequence>MDTAVNESLSISYNLEQFLIVLSVSLSIATLSKTVPILRKIPYTLLLVIVGMALAFVDVKLINLSPELIMEIFLPPLLFEAAWNLQWRNLKENWFPITLFATLGVVICVVGIAFPLSYWGGMELAIAFLAAAALSATDPVSVIALFKELGASKKLNTLMEGESLFNDGVAVVVFLILVGIPLGTSTFDLSVTLARFVTVIGIGVGCGLVIGFSLSLLTQRFDLPFVEQSLTLVSAYGAYILAENLGGSGVIGVVVVGMVLGNYGSRIGMNPRTRLIVSIFWEFVAFFVNSIIFLLIGDQIGLSSLSDHLNLILIAIAAVVVTRLVSVFGLSLISNKVSDQISSTHITLQEQTVLWWGGLRGSVAIAVALSVPQAIAERQAIIDIVFGVVLFTLLVQGLTTQFVLKGLDLIGDQPQRLEYAELVSRQIALRRVLAELEKTDEFPDINPERLRYKQELVQGQLQSVTDKLKLLLQEYPLLQEVANKKFDQTVLDIEAETYADLIRMGRLEENIMPLLVTLEGENVAEPS</sequence>
<reference key="1">
    <citation type="journal article" date="1996" name="DNA Res.">
        <title>Sequence analysis of the genome of the unicellular cyanobacterium Synechocystis sp. strain PCC6803. II. Sequence determination of the entire genome and assignment of potential protein-coding regions.</title>
        <authorList>
            <person name="Kaneko T."/>
            <person name="Sato S."/>
            <person name="Kotani H."/>
            <person name="Tanaka A."/>
            <person name="Asamizu E."/>
            <person name="Nakamura Y."/>
            <person name="Miyajima N."/>
            <person name="Hirosawa M."/>
            <person name="Sugiura M."/>
            <person name="Sasamoto S."/>
            <person name="Kimura T."/>
            <person name="Hosouchi T."/>
            <person name="Matsuno A."/>
            <person name="Muraki A."/>
            <person name="Nakazaki N."/>
            <person name="Naruo K."/>
            <person name="Okumura S."/>
            <person name="Shimpo S."/>
            <person name="Takeuchi C."/>
            <person name="Wada T."/>
            <person name="Watanabe A."/>
            <person name="Yamada M."/>
            <person name="Yasuda M."/>
            <person name="Tabata S."/>
        </authorList>
    </citation>
    <scope>NUCLEOTIDE SEQUENCE [LARGE SCALE GENOMIC DNA]</scope>
    <source>
        <strain>ATCC 27184 / PCC 6803 / Kazusa</strain>
    </source>
</reference>
<reference key="2">
    <citation type="journal article" date="2001" name="J. Bacteriol.">
        <title>Functional expression in Escherichia coli of low-affinity and high-affinity Na(+)(Li(+))/H(+) antiporters of Synechocystis.</title>
        <authorList>
            <person name="Inaba M."/>
            <person name="Sakamoto A."/>
            <person name="Murata N."/>
        </authorList>
    </citation>
    <scope>FUNCTION</scope>
    <scope>BIOPHYSICOCHEMICAL PROPERTIES</scope>
    <scope>GENE NAME</scope>
    <source>
        <strain>ATCC 27184 / PCC 6803 / N-1</strain>
    </source>
</reference>
<reference key="3">
    <citation type="journal article" date="2002" name="Biochemistry (Mosc.)">
        <title>Functional analysis of the Na+/H+ antiporter encoding genes of the cyanobacterium Synechocystis PCC 6803.</title>
        <authorList>
            <person name="Elanskaya I.V."/>
            <person name="Karandashova I.V."/>
            <person name="Bogachev A.V."/>
            <person name="Hagemann M."/>
        </authorList>
    </citation>
    <scope>FUNCTION</scope>
    <source>
        <strain>ATCC 27184 / PCC 6803 / N-1</strain>
    </source>
</reference>
<comment type="function">
    <text evidence="2 3">Na(+)/H(+) antiporter that extrudes sodium in exchange for external protons. Might be able to function at relatively high concentrations of Na(+) ions. Also has Li(+)/H(+) antiport activity under K(+)-rich conditions, but it might not have any physiological relevance.</text>
</comment>
<comment type="biophysicochemical properties">
    <kinetics>
        <KM evidence="2">7.7 mM for Na(+) (under K(+)-free conditions)</KM>
        <KM evidence="2">2.5 mM for Li(+) (under K(+)-free conditions)</KM>
    </kinetics>
</comment>
<comment type="subcellular location">
    <subcellularLocation>
        <location evidence="4">Cell membrane</location>
        <topology evidence="4">Multi-pass membrane protein</topology>
    </subcellularLocation>
</comment>
<comment type="similarity">
    <text evidence="4">Belongs to the monovalent cation:proton antiporter 1 (CPA1) transporter (TC 2.A.36) family.</text>
</comment>
<keyword id="KW-0050">Antiport</keyword>
<keyword id="KW-1003">Cell membrane</keyword>
<keyword id="KW-0406">Ion transport</keyword>
<keyword id="KW-0472">Membrane</keyword>
<keyword id="KW-1185">Reference proteome</keyword>
<keyword id="KW-0915">Sodium</keyword>
<keyword id="KW-0739">Sodium transport</keyword>
<keyword id="KW-0812">Transmembrane</keyword>
<keyword id="KW-1133">Transmembrane helix</keyword>
<keyword id="KW-0813">Transport</keyword>
<name>NHAS1_SYNY3</name>
<accession>P73863</accession>
<organism>
    <name type="scientific">Synechocystis sp. (strain ATCC 27184 / PCC 6803 / Kazusa)</name>
    <dbReference type="NCBI Taxonomy" id="1111708"/>
    <lineage>
        <taxon>Bacteria</taxon>
        <taxon>Bacillati</taxon>
        <taxon>Cyanobacteriota</taxon>
        <taxon>Cyanophyceae</taxon>
        <taxon>Synechococcales</taxon>
        <taxon>Merismopediaceae</taxon>
        <taxon>Synechocystis</taxon>
    </lineage>
</organism>
<proteinExistence type="evidence at protein level"/>
<dbReference type="EMBL" id="BA000022">
    <property type="protein sequence ID" value="BAA17925.1"/>
    <property type="molecule type" value="Genomic_DNA"/>
</dbReference>
<dbReference type="PIR" id="S75063">
    <property type="entry name" value="S75063"/>
</dbReference>
<dbReference type="SMR" id="P73863"/>
<dbReference type="FunCoup" id="P73863">
    <property type="interactions" value="38"/>
</dbReference>
<dbReference type="IntAct" id="P73863">
    <property type="interactions" value="4"/>
</dbReference>
<dbReference type="STRING" id="1148.gene:10498794"/>
<dbReference type="TCDB" id="2.A.36.7.2">
    <property type="family name" value="the monovalent cation:proton antiporter-1 (cpa1) family"/>
</dbReference>
<dbReference type="PaxDb" id="1148-1653008"/>
<dbReference type="EnsemblBacteria" id="BAA17925">
    <property type="protein sequence ID" value="BAA17925"/>
    <property type="gene ID" value="BAA17925"/>
</dbReference>
<dbReference type="KEGG" id="syn:slr1727"/>
<dbReference type="eggNOG" id="COG0025">
    <property type="taxonomic scope" value="Bacteria"/>
</dbReference>
<dbReference type="InParanoid" id="P73863"/>
<dbReference type="PhylomeDB" id="P73863"/>
<dbReference type="SABIO-RK" id="P73863"/>
<dbReference type="Proteomes" id="UP000001425">
    <property type="component" value="Chromosome"/>
</dbReference>
<dbReference type="GO" id="GO:0005886">
    <property type="term" value="C:plasma membrane"/>
    <property type="evidence" value="ECO:0000318"/>
    <property type="project" value="GO_Central"/>
</dbReference>
<dbReference type="GO" id="GO:0015386">
    <property type="term" value="F:potassium:proton antiporter activity"/>
    <property type="evidence" value="ECO:0000318"/>
    <property type="project" value="GO_Central"/>
</dbReference>
<dbReference type="GO" id="GO:0015385">
    <property type="term" value="F:sodium:proton antiporter activity"/>
    <property type="evidence" value="ECO:0000318"/>
    <property type="project" value="GO_Central"/>
</dbReference>
<dbReference type="GO" id="GO:0071805">
    <property type="term" value="P:potassium ion transmembrane transport"/>
    <property type="evidence" value="ECO:0000318"/>
    <property type="project" value="GO_Central"/>
</dbReference>
<dbReference type="GO" id="GO:0051453">
    <property type="term" value="P:regulation of intracellular pH"/>
    <property type="evidence" value="ECO:0000318"/>
    <property type="project" value="GO_Central"/>
</dbReference>
<dbReference type="GO" id="GO:0098719">
    <property type="term" value="P:sodium ion import across plasma membrane"/>
    <property type="evidence" value="ECO:0000318"/>
    <property type="project" value="GO_Central"/>
</dbReference>
<dbReference type="Gene3D" id="6.10.140.1330">
    <property type="match status" value="1"/>
</dbReference>
<dbReference type="InterPro" id="IPR018422">
    <property type="entry name" value="Cation/H_exchanger_CPA1"/>
</dbReference>
<dbReference type="InterPro" id="IPR004705">
    <property type="entry name" value="Cation/H_exchanger_CPA1_bac"/>
</dbReference>
<dbReference type="InterPro" id="IPR006153">
    <property type="entry name" value="Cation/H_exchanger_TM"/>
</dbReference>
<dbReference type="NCBIfam" id="TIGR00831">
    <property type="entry name" value="a_cpa1"/>
    <property type="match status" value="1"/>
</dbReference>
<dbReference type="PANTHER" id="PTHR10110:SF195">
    <property type="entry name" value="NA(+)_H(+) ANTIPORTER NHAS2"/>
    <property type="match status" value="1"/>
</dbReference>
<dbReference type="PANTHER" id="PTHR10110">
    <property type="entry name" value="SODIUM/HYDROGEN EXCHANGER"/>
    <property type="match status" value="1"/>
</dbReference>
<dbReference type="Pfam" id="PF00999">
    <property type="entry name" value="Na_H_Exchanger"/>
    <property type="match status" value="1"/>
</dbReference>
<gene>
    <name type="primary">nhaS1</name>
    <name type="ordered locus">slr1727</name>
</gene>
<protein>
    <recommendedName>
        <fullName>Low-affinity Na(+)/H(+) antiporter NhaS1</fullName>
    </recommendedName>
    <alternativeName>
        <fullName>Sodium/proton antiporter NhaS1</fullName>
    </alternativeName>
</protein>
<feature type="chain" id="PRO_0000423927" description="Low-affinity Na(+)/H(+) antiporter NhaS1">
    <location>
        <begin position="1"/>
        <end position="527"/>
    </location>
</feature>
<feature type="transmembrane region" description="Helical" evidence="1">
    <location>
        <begin position="18"/>
        <end position="38"/>
    </location>
</feature>
<feature type="transmembrane region" description="Helical" evidence="1">
    <location>
        <begin position="41"/>
        <end position="61"/>
    </location>
</feature>
<feature type="transmembrane region" description="Helical" evidence="1">
    <location>
        <begin position="94"/>
        <end position="114"/>
    </location>
</feature>
<feature type="transmembrane region" description="Helical" evidence="1">
    <location>
        <begin position="126"/>
        <end position="146"/>
    </location>
</feature>
<feature type="transmembrane region" description="Helical" evidence="1">
    <location>
        <begin position="169"/>
        <end position="189"/>
    </location>
</feature>
<feature type="transmembrane region" description="Helical" evidence="1">
    <location>
        <begin position="196"/>
        <end position="216"/>
    </location>
</feature>
<feature type="transmembrane region" description="Helical" evidence="1">
    <location>
        <begin position="240"/>
        <end position="260"/>
    </location>
</feature>
<feature type="transmembrane region" description="Helical" evidence="1">
    <location>
        <begin position="276"/>
        <end position="296"/>
    </location>
</feature>
<feature type="transmembrane region" description="Helical" evidence="1">
    <location>
        <begin position="311"/>
        <end position="331"/>
    </location>
</feature>
<feature type="transmembrane region" description="Helical" evidence="1">
    <location>
        <begin position="352"/>
        <end position="372"/>
    </location>
</feature>
<feature type="transmembrane region" description="Helical" evidence="1">
    <location>
        <begin position="380"/>
        <end position="400"/>
    </location>
</feature>